<accession>Q1CMJ1</accession>
<accession>C4GP13</accession>
<feature type="chain" id="PRO_0000366543" description="Ribosomal RNA large subunit methyltransferase G">
    <location>
        <begin position="1"/>
        <end position="395"/>
    </location>
</feature>
<proteinExistence type="inferred from homology"/>
<protein>
    <recommendedName>
        <fullName evidence="1">Ribosomal RNA large subunit methyltransferase G</fullName>
        <ecNumber evidence="1">2.1.1.174</ecNumber>
    </recommendedName>
    <alternativeName>
        <fullName evidence="1">23S rRNA m2G1835 methyltransferase</fullName>
    </alternativeName>
    <alternativeName>
        <fullName evidence="1">rRNA (guanine-N(2)-)-methyltransferase RlmG</fullName>
    </alternativeName>
</protein>
<sequence>MSQLDLGTQSLELERFPPQENSNTLQAWEAADEYLLQNIDLSQIDGRPVLVFNDQFGTLACALHAYRPFSSSDSYMSQLATAHNLRLNHLDESAVTLLSSVDDLPEAPKLVVIKIPKALALLEHQLRALRRVVAPDTVIIAGAKSRDVHNSTLQLFEKILGPTKTTLAWKKARLIHCEVADIPLADAPETIDWPLPNTDYIIHNHANVFSRNNLDIGARFFMEILPYDVTGKIADLGCGNGVVGLIALEQNPLAEMLFVDESYMAVASSELNITVNRPQDLSRCEFMVSHGLAGVERESLQLVLCNPPFHQQHAVSDHVAWQMFCDAKRCLKAGGELMIVGNRHLDYFHKLKRLFGNCETLDSNQKFMVLKSVKQASSRSEGGGSGSLDMSYSDF</sequence>
<organism>
    <name type="scientific">Yersinia pestis bv. Antiqua (strain Nepal516)</name>
    <dbReference type="NCBI Taxonomy" id="377628"/>
    <lineage>
        <taxon>Bacteria</taxon>
        <taxon>Pseudomonadati</taxon>
        <taxon>Pseudomonadota</taxon>
        <taxon>Gammaproteobacteria</taxon>
        <taxon>Enterobacterales</taxon>
        <taxon>Yersiniaceae</taxon>
        <taxon>Yersinia</taxon>
    </lineage>
</organism>
<gene>
    <name evidence="1" type="primary">rlmG</name>
    <name type="ordered locus">YPN_0457</name>
    <name type="ORF">YP516_0473</name>
</gene>
<evidence type="ECO:0000255" key="1">
    <source>
        <dbReference type="HAMAP-Rule" id="MF_01859"/>
    </source>
</evidence>
<reference key="1">
    <citation type="journal article" date="2006" name="J. Bacteriol.">
        <title>Complete genome sequence of Yersinia pestis strains Antiqua and Nepal516: evidence of gene reduction in an emerging pathogen.</title>
        <authorList>
            <person name="Chain P.S.G."/>
            <person name="Hu P."/>
            <person name="Malfatti S.A."/>
            <person name="Radnedge L."/>
            <person name="Larimer F."/>
            <person name="Vergez L.M."/>
            <person name="Worsham P."/>
            <person name="Chu M.C."/>
            <person name="Andersen G.L."/>
        </authorList>
    </citation>
    <scope>NUCLEOTIDE SEQUENCE [LARGE SCALE GENOMIC DNA]</scope>
    <source>
        <strain>Nepal516</strain>
    </source>
</reference>
<reference key="2">
    <citation type="submission" date="2009-04" db="EMBL/GenBank/DDBJ databases">
        <title>Yersinia pestis Nepal516A whole genome shotgun sequencing project.</title>
        <authorList>
            <person name="Plunkett G. III"/>
            <person name="Anderson B.D."/>
            <person name="Baumler D.J."/>
            <person name="Burland V."/>
            <person name="Cabot E.L."/>
            <person name="Glasner J.D."/>
            <person name="Mau B."/>
            <person name="Neeno-Eckwall E."/>
            <person name="Perna N.T."/>
            <person name="Munk A.C."/>
            <person name="Tapia R."/>
            <person name="Green L.D."/>
            <person name="Rogers Y.C."/>
            <person name="Detter J.C."/>
            <person name="Bruce D.C."/>
            <person name="Brettin T.S."/>
        </authorList>
    </citation>
    <scope>NUCLEOTIDE SEQUENCE [LARGE SCALE GENOMIC DNA]</scope>
    <source>
        <strain>Nepal516</strain>
    </source>
</reference>
<keyword id="KW-0963">Cytoplasm</keyword>
<keyword id="KW-0489">Methyltransferase</keyword>
<keyword id="KW-0698">rRNA processing</keyword>
<keyword id="KW-0949">S-adenosyl-L-methionine</keyword>
<keyword id="KW-0808">Transferase</keyword>
<comment type="function">
    <text evidence="1">Specifically methylates the guanine in position 1835 (m2G1835) of 23S rRNA.</text>
</comment>
<comment type="catalytic activity">
    <reaction evidence="1">
        <text>guanosine(1835) in 23S rRNA + S-adenosyl-L-methionine = N(2)-methylguanosine(1835) in 23S rRNA + S-adenosyl-L-homocysteine + H(+)</text>
        <dbReference type="Rhea" id="RHEA:42744"/>
        <dbReference type="Rhea" id="RHEA-COMP:10217"/>
        <dbReference type="Rhea" id="RHEA-COMP:10218"/>
        <dbReference type="ChEBI" id="CHEBI:15378"/>
        <dbReference type="ChEBI" id="CHEBI:57856"/>
        <dbReference type="ChEBI" id="CHEBI:59789"/>
        <dbReference type="ChEBI" id="CHEBI:74269"/>
        <dbReference type="ChEBI" id="CHEBI:74481"/>
        <dbReference type="EC" id="2.1.1.174"/>
    </reaction>
</comment>
<comment type="subcellular location">
    <subcellularLocation>
        <location evidence="1">Cytoplasm</location>
    </subcellularLocation>
</comment>
<comment type="similarity">
    <text evidence="1">Belongs to the methyltransferase superfamily. RlmG family.</text>
</comment>
<name>RLMG_YERPN</name>
<dbReference type="EC" id="2.1.1.174" evidence="1"/>
<dbReference type="EMBL" id="CP000305">
    <property type="protein sequence ID" value="ABG16789.1"/>
    <property type="molecule type" value="Genomic_DNA"/>
</dbReference>
<dbReference type="EMBL" id="ACNQ01000006">
    <property type="protein sequence ID" value="EEO78245.1"/>
    <property type="molecule type" value="Genomic_DNA"/>
</dbReference>
<dbReference type="PIR" id="AB0073">
    <property type="entry name" value="AB0073"/>
</dbReference>
<dbReference type="RefSeq" id="WP_002210402.1">
    <property type="nucleotide sequence ID" value="NZ_ACNQ01000006.1"/>
</dbReference>
<dbReference type="SMR" id="Q1CMJ1"/>
<dbReference type="GeneID" id="57974028"/>
<dbReference type="KEGG" id="ypn:YPN_0457"/>
<dbReference type="HOGENOM" id="CLU_040288_4_0_6"/>
<dbReference type="Proteomes" id="UP000008936">
    <property type="component" value="Chromosome"/>
</dbReference>
<dbReference type="GO" id="GO:0005737">
    <property type="term" value="C:cytoplasm"/>
    <property type="evidence" value="ECO:0007669"/>
    <property type="project" value="UniProtKB-SubCell"/>
</dbReference>
<dbReference type="GO" id="GO:0052916">
    <property type="term" value="F:23S rRNA (guanine(1835)-N(2))-methyltransferase activity"/>
    <property type="evidence" value="ECO:0007669"/>
    <property type="project" value="UniProtKB-EC"/>
</dbReference>
<dbReference type="GO" id="GO:0003676">
    <property type="term" value="F:nucleic acid binding"/>
    <property type="evidence" value="ECO:0007669"/>
    <property type="project" value="InterPro"/>
</dbReference>
<dbReference type="CDD" id="cd02440">
    <property type="entry name" value="AdoMet_MTases"/>
    <property type="match status" value="1"/>
</dbReference>
<dbReference type="Gene3D" id="3.40.50.150">
    <property type="entry name" value="Vaccinia Virus protein VP39"/>
    <property type="match status" value="2"/>
</dbReference>
<dbReference type="HAMAP" id="MF_01859">
    <property type="entry name" value="23SrRNA_methyltr_G"/>
    <property type="match status" value="1"/>
</dbReference>
<dbReference type="InterPro" id="IPR002052">
    <property type="entry name" value="DNA_methylase_N6_adenine_CS"/>
</dbReference>
<dbReference type="InterPro" id="IPR017237">
    <property type="entry name" value="rRNA_m2G-MeTrfase_RlmG"/>
</dbReference>
<dbReference type="InterPro" id="IPR046977">
    <property type="entry name" value="RsmC/RlmG"/>
</dbReference>
<dbReference type="InterPro" id="IPR029063">
    <property type="entry name" value="SAM-dependent_MTases_sf"/>
</dbReference>
<dbReference type="InterPro" id="IPR007848">
    <property type="entry name" value="Small_mtfrase_dom"/>
</dbReference>
<dbReference type="NCBIfam" id="NF011577">
    <property type="entry name" value="PRK15001.1"/>
    <property type="match status" value="1"/>
</dbReference>
<dbReference type="PANTHER" id="PTHR47816:SF5">
    <property type="entry name" value="RIBOSOMAL RNA LARGE SUBUNIT METHYLTRANSFERASE G"/>
    <property type="match status" value="1"/>
</dbReference>
<dbReference type="PANTHER" id="PTHR47816">
    <property type="entry name" value="RIBOSOMAL RNA SMALL SUBUNIT METHYLTRANSFERASE C"/>
    <property type="match status" value="1"/>
</dbReference>
<dbReference type="Pfam" id="PF05175">
    <property type="entry name" value="MTS"/>
    <property type="match status" value="1"/>
</dbReference>
<dbReference type="PIRSF" id="PIRSF037565">
    <property type="entry name" value="RRNA_m2G_Mtase_RsmD_prd"/>
    <property type="match status" value="1"/>
</dbReference>
<dbReference type="SUPFAM" id="SSF53335">
    <property type="entry name" value="S-adenosyl-L-methionine-dependent methyltransferases"/>
    <property type="match status" value="1"/>
</dbReference>